<protein>
    <recommendedName>
        <fullName>Cytochrome b</fullName>
    </recommendedName>
    <alternativeName>
        <fullName>Complex III subunit 3</fullName>
    </alternativeName>
    <alternativeName>
        <fullName>Complex III subunit III</fullName>
    </alternativeName>
    <alternativeName>
        <fullName>Cytochrome b-c1 complex subunit 3</fullName>
    </alternativeName>
    <alternativeName>
        <fullName>Ubiquinol-cytochrome-c reductase complex cytochrome b subunit</fullName>
    </alternativeName>
</protein>
<dbReference type="EMBL" id="X58437">
    <property type="protein sequence ID" value="CAA41343.1"/>
    <property type="status" value="ALT_SEQ"/>
    <property type="molecule type" value="Genomic_DNA"/>
</dbReference>
<dbReference type="PIR" id="S17427">
    <property type="entry name" value="CBPOM"/>
</dbReference>
<dbReference type="SMR" id="P29757"/>
<dbReference type="FunCoup" id="P29757">
    <property type="interactions" value="106"/>
</dbReference>
<dbReference type="STRING" id="4113.P29757"/>
<dbReference type="InParanoid" id="P29757"/>
<dbReference type="Proteomes" id="UP000011115">
    <property type="component" value="Unassembled WGS sequence"/>
</dbReference>
<dbReference type="GO" id="GO:0016020">
    <property type="term" value="C:membrane"/>
    <property type="evidence" value="ECO:0000318"/>
    <property type="project" value="GO_Central"/>
</dbReference>
<dbReference type="GO" id="GO:0005743">
    <property type="term" value="C:mitochondrial inner membrane"/>
    <property type="evidence" value="ECO:0007669"/>
    <property type="project" value="UniProtKB-SubCell"/>
</dbReference>
<dbReference type="GO" id="GO:0045275">
    <property type="term" value="C:respiratory chain complex III"/>
    <property type="evidence" value="ECO:0000318"/>
    <property type="project" value="GO_Central"/>
</dbReference>
<dbReference type="GO" id="GO:0046872">
    <property type="term" value="F:metal ion binding"/>
    <property type="evidence" value="ECO:0007669"/>
    <property type="project" value="UniProtKB-KW"/>
</dbReference>
<dbReference type="GO" id="GO:0008121">
    <property type="term" value="F:ubiquinol-cytochrome-c reductase activity"/>
    <property type="evidence" value="ECO:0007669"/>
    <property type="project" value="InterPro"/>
</dbReference>
<dbReference type="GO" id="GO:0006122">
    <property type="term" value="P:mitochondrial electron transport, ubiquinol to cytochrome c"/>
    <property type="evidence" value="ECO:0000318"/>
    <property type="project" value="GO_Central"/>
</dbReference>
<dbReference type="CDD" id="cd00290">
    <property type="entry name" value="cytochrome_b_C"/>
    <property type="match status" value="1"/>
</dbReference>
<dbReference type="CDD" id="cd00284">
    <property type="entry name" value="Cytochrome_b_N"/>
    <property type="match status" value="1"/>
</dbReference>
<dbReference type="FunFam" id="1.20.810.10:FF:000006">
    <property type="entry name" value="Cytochrome b"/>
    <property type="match status" value="1"/>
</dbReference>
<dbReference type="Gene3D" id="1.20.810.10">
    <property type="entry name" value="Cytochrome Bc1 Complex, Chain C"/>
    <property type="match status" value="1"/>
</dbReference>
<dbReference type="InterPro" id="IPR005798">
    <property type="entry name" value="Cyt_b/b6_C"/>
</dbReference>
<dbReference type="InterPro" id="IPR036150">
    <property type="entry name" value="Cyt_b/b6_C_sf"/>
</dbReference>
<dbReference type="InterPro" id="IPR005797">
    <property type="entry name" value="Cyt_b/b6_N"/>
</dbReference>
<dbReference type="InterPro" id="IPR027387">
    <property type="entry name" value="Cytb/b6-like_sf"/>
</dbReference>
<dbReference type="InterPro" id="IPR030689">
    <property type="entry name" value="Cytochrome_b"/>
</dbReference>
<dbReference type="InterPro" id="IPR048260">
    <property type="entry name" value="Cytochrome_b_C_euk/bac"/>
</dbReference>
<dbReference type="InterPro" id="IPR048259">
    <property type="entry name" value="Cytochrome_b_N_euk/bac"/>
</dbReference>
<dbReference type="InterPro" id="IPR016174">
    <property type="entry name" value="Di-haem_cyt_TM"/>
</dbReference>
<dbReference type="PANTHER" id="PTHR19271">
    <property type="entry name" value="CYTOCHROME B"/>
    <property type="match status" value="1"/>
</dbReference>
<dbReference type="PANTHER" id="PTHR19271:SF16">
    <property type="entry name" value="CYTOCHROME B"/>
    <property type="match status" value="1"/>
</dbReference>
<dbReference type="Pfam" id="PF00032">
    <property type="entry name" value="Cytochrom_B_C"/>
    <property type="match status" value="1"/>
</dbReference>
<dbReference type="Pfam" id="PF00033">
    <property type="entry name" value="Cytochrome_B"/>
    <property type="match status" value="1"/>
</dbReference>
<dbReference type="PIRSF" id="PIRSF038885">
    <property type="entry name" value="COB"/>
    <property type="match status" value="1"/>
</dbReference>
<dbReference type="SUPFAM" id="SSF81648">
    <property type="entry name" value="a domain/subunit of cytochrome bc1 complex (Ubiquinol-cytochrome c reductase)"/>
    <property type="match status" value="1"/>
</dbReference>
<dbReference type="SUPFAM" id="SSF81342">
    <property type="entry name" value="Transmembrane di-heme cytochromes"/>
    <property type="match status" value="1"/>
</dbReference>
<dbReference type="PROSITE" id="PS51003">
    <property type="entry name" value="CYTB_CTER"/>
    <property type="match status" value="1"/>
</dbReference>
<dbReference type="PROSITE" id="PS51002">
    <property type="entry name" value="CYTB_NTER"/>
    <property type="match status" value="1"/>
</dbReference>
<reference key="1">
    <citation type="journal article" date="1991" name="Plant Mol. Biol.">
        <title>Isolation and nucleotide sequence of the potato mitochondrial gene for apocytochrome b.</title>
        <authorList>
            <person name="Zanlungo S."/>
            <person name="Litvak S."/>
            <person name="Jordana X."/>
        </authorList>
    </citation>
    <scope>NUCLEOTIDE SEQUENCE [GENOMIC DNA]</scope>
    <source>
        <strain>cv. Bintje</strain>
    </source>
</reference>
<reference key="2">
    <citation type="journal article" date="1993" name="FEBS Lett.">
        <title>Purification and sequencing of cytochrome b from potato reveals methionine cleavage of a mitochondrially encoded protein.</title>
        <authorList>
            <person name="Braun H.-P."/>
            <person name="Schmitz U.K."/>
        </authorList>
    </citation>
    <scope>PROTEIN SEQUENCE OF 2-16</scope>
    <source>
        <tissue>Tuber</tissue>
    </source>
</reference>
<reference key="3">
    <citation type="journal article" date="1993" name="Curr. Genet.">
        <title>RNA editing of apocytochrome b (cob) transcripts in mitochondria from two genera of plants.</title>
        <authorList>
            <person name="Zanlungo S."/>
            <person name="Begu D."/>
            <person name="Quinones V."/>
            <person name="Araya A."/>
            <person name="Jordana X."/>
        </authorList>
    </citation>
    <scope>RNA EDITING</scope>
</reference>
<feature type="initiator methionine" description="Removed" evidence="7">
    <location>
        <position position="1"/>
    </location>
</feature>
<feature type="chain" id="PRO_0000061547" description="Cytochrome b">
    <location>
        <begin position="2"/>
        <end position="393"/>
    </location>
</feature>
<feature type="transmembrane region" description="Helical" evidence="3">
    <location>
        <begin position="38"/>
        <end position="58"/>
    </location>
</feature>
<feature type="transmembrane region" description="Helical" evidence="3">
    <location>
        <begin position="82"/>
        <end position="104"/>
    </location>
</feature>
<feature type="transmembrane region" description="Helical" evidence="3">
    <location>
        <begin position="119"/>
        <end position="139"/>
    </location>
</feature>
<feature type="transmembrane region" description="Helical" evidence="3">
    <location>
        <begin position="185"/>
        <end position="205"/>
    </location>
</feature>
<feature type="transmembrane region" description="Helical" evidence="3">
    <location>
        <begin position="231"/>
        <end position="251"/>
    </location>
</feature>
<feature type="transmembrane region" description="Helical" evidence="3">
    <location>
        <begin position="295"/>
        <end position="315"/>
    </location>
</feature>
<feature type="transmembrane region" description="Helical" evidence="3">
    <location>
        <begin position="327"/>
        <end position="347"/>
    </location>
</feature>
<feature type="transmembrane region" description="Helical" evidence="3">
    <location>
        <begin position="354"/>
        <end position="373"/>
    </location>
</feature>
<feature type="binding site" description="axial binding residue" evidence="3">
    <location>
        <position position="88"/>
    </location>
    <ligand>
        <name>heme b</name>
        <dbReference type="ChEBI" id="CHEBI:60344"/>
        <label>b562</label>
    </ligand>
    <ligandPart>
        <name>Fe</name>
        <dbReference type="ChEBI" id="CHEBI:18248"/>
    </ligandPart>
</feature>
<feature type="binding site" description="axial binding residue" evidence="3">
    <location>
        <position position="102"/>
    </location>
    <ligand>
        <name>heme b</name>
        <dbReference type="ChEBI" id="CHEBI:60344"/>
        <label>b566</label>
    </ligand>
    <ligandPart>
        <name>Fe</name>
        <dbReference type="ChEBI" id="CHEBI:18248"/>
    </ligandPart>
</feature>
<feature type="binding site" description="axial binding residue" evidence="3">
    <location>
        <position position="189"/>
    </location>
    <ligand>
        <name>heme b</name>
        <dbReference type="ChEBI" id="CHEBI:60344"/>
        <label>b562</label>
    </ligand>
    <ligandPart>
        <name>Fe</name>
        <dbReference type="ChEBI" id="CHEBI:18248"/>
    </ligandPart>
</feature>
<feature type="binding site" description="axial binding residue" evidence="3">
    <location>
        <position position="203"/>
    </location>
    <ligand>
        <name>heme b</name>
        <dbReference type="ChEBI" id="CHEBI:60344"/>
        <label>b566</label>
    </ligand>
    <ligandPart>
        <name>Fe</name>
        <dbReference type="ChEBI" id="CHEBI:18248"/>
    </ligandPart>
</feature>
<feature type="binding site" evidence="2">
    <location>
        <position position="208"/>
    </location>
    <ligand>
        <name>a ubiquinone</name>
        <dbReference type="ChEBI" id="CHEBI:16389"/>
    </ligand>
</feature>
<evidence type="ECO:0000250" key="1"/>
<evidence type="ECO:0000250" key="2">
    <source>
        <dbReference type="UniProtKB" id="P00157"/>
    </source>
</evidence>
<evidence type="ECO:0000250" key="3">
    <source>
        <dbReference type="UniProtKB" id="P00163"/>
    </source>
</evidence>
<evidence type="ECO:0000255" key="4">
    <source>
        <dbReference type="PROSITE-ProRule" id="PRU00967"/>
    </source>
</evidence>
<evidence type="ECO:0000255" key="5">
    <source>
        <dbReference type="PROSITE-ProRule" id="PRU00968"/>
    </source>
</evidence>
<evidence type="ECO:0000269" key="6">
    <source>
    </source>
</evidence>
<evidence type="ECO:0000269" key="7">
    <source>
    </source>
</evidence>
<comment type="function">
    <text evidence="3">Component of the ubiquinol-cytochrome c reductase complex (complex III or cytochrome b-c1 complex) that is part of the mitochondrial respiratory chain. The b-c1 complex mediates electron transfer from ubiquinol to cytochrome c. Contributes to the generation of a proton gradient across the mitochondrial membrane that is then used for ATP synthesis.</text>
</comment>
<comment type="cofactor">
    <cofactor evidence="3">
        <name>heme b</name>
        <dbReference type="ChEBI" id="CHEBI:60344"/>
    </cofactor>
    <text evidence="3">Binds 2 heme b groups non-covalently.</text>
</comment>
<comment type="subunit">
    <text evidence="1">The main subunits of complex b-c1 are: cytochrome b, cytochrome c1 and the Rieske protein.</text>
</comment>
<comment type="subcellular location">
    <subcellularLocation>
        <location evidence="3">Mitochondrion inner membrane</location>
        <topology evidence="3">Multi-pass membrane protein</topology>
    </subcellularLocation>
</comment>
<comment type="PTM">
    <text>First mitochondrial-encoded protein to be shown to have its N-terminal methionine cleaved off.</text>
</comment>
<comment type="RNA editing">
    <location>
        <position position="18" evidence="6"/>
    </location>
    <location>
        <position position="100" evidence="6"/>
    </location>
    <location>
        <position position="109" evidence="6"/>
    </location>
    <location>
        <position position="120" evidence="6"/>
    </location>
    <location>
        <position position="190" evidence="6"/>
    </location>
    <location>
        <position position="227" evidence="6"/>
    </location>
    <location>
        <position position="285" evidence="6"/>
    </location>
    <location>
        <position position="303" evidence="6"/>
    </location>
    <location>
        <position position="328" evidence="6"/>
    </location>
    <location>
        <position position="362" evidence="6"/>
    </location>
</comment>
<comment type="miscellaneous">
    <text evidence="1">Heme 1 (or BL or b562) is low-potential and absorbs at about 562 nm, and heme 2 (or BH or b566) is high-potential and absorbs at about 566 nm.</text>
</comment>
<comment type="similarity">
    <text evidence="4 5">Belongs to the cytochrome b family.</text>
</comment>
<comment type="caution">
    <text evidence="3">The protein contains only eight transmembrane helices, not nine as predicted by bioinformatics tools.</text>
</comment>
<gene>
    <name type="primary">MT-CYB</name>
    <name type="synonym">COB</name>
    <name type="synonym">CYTB</name>
    <name type="synonym">MTCYB</name>
</gene>
<geneLocation type="mitochondrion"/>
<accession>P29757</accession>
<proteinExistence type="evidence at protein level"/>
<sequence length="393" mass="44283">MTIRNQRLSLLKQPISSILNQHLIDYPTPSNLSYWWGFGSLAGICLVIQIVTGVFLAMHYTPHVDLAFNSVEHIMRDVEGGWLLRYMHANGASMFFIVVYLHIFRGLYYASYSSPREFVWCLGVVIFLLMIVTAFIGYVLPWGQMSFWGATVITSLASAIPVVGDTIVTWLWGGFSVDNATLNRFFSLHYLLPFILVGASLLHLAALHQYGSNNPLGVHSEMDKIAFYPYFYVKDLVGWVAFAIFFSIWIFYAPNVLGHPDNYIPANPMSTPPHIVPEWYFLPIYAILRSIPDKVGGVAAIALVFICLLALPFFKSMYVRSSSFRPIYQGIFWLLLADCLLLGWIGCQPVEAPFVTIGQISSLVFFLFFAITPILGRVGRGIPNSYTDETDHT</sequence>
<organism>
    <name type="scientific">Solanum tuberosum</name>
    <name type="common">Potato</name>
    <dbReference type="NCBI Taxonomy" id="4113"/>
    <lineage>
        <taxon>Eukaryota</taxon>
        <taxon>Viridiplantae</taxon>
        <taxon>Streptophyta</taxon>
        <taxon>Embryophyta</taxon>
        <taxon>Tracheophyta</taxon>
        <taxon>Spermatophyta</taxon>
        <taxon>Magnoliopsida</taxon>
        <taxon>eudicotyledons</taxon>
        <taxon>Gunneridae</taxon>
        <taxon>Pentapetalae</taxon>
        <taxon>asterids</taxon>
        <taxon>lamiids</taxon>
        <taxon>Solanales</taxon>
        <taxon>Solanaceae</taxon>
        <taxon>Solanoideae</taxon>
        <taxon>Solaneae</taxon>
        <taxon>Solanum</taxon>
    </lineage>
</organism>
<name>CYB_SOLTU</name>
<keyword id="KW-0903">Direct protein sequencing</keyword>
<keyword id="KW-0249">Electron transport</keyword>
<keyword id="KW-0349">Heme</keyword>
<keyword id="KW-0408">Iron</keyword>
<keyword id="KW-0472">Membrane</keyword>
<keyword id="KW-0479">Metal-binding</keyword>
<keyword id="KW-0496">Mitochondrion</keyword>
<keyword id="KW-0999">Mitochondrion inner membrane</keyword>
<keyword id="KW-1185">Reference proteome</keyword>
<keyword id="KW-0679">Respiratory chain</keyword>
<keyword id="KW-0691">RNA editing</keyword>
<keyword id="KW-0812">Transmembrane</keyword>
<keyword id="KW-1133">Transmembrane helix</keyword>
<keyword id="KW-0813">Transport</keyword>
<keyword id="KW-0830">Ubiquinone</keyword>